<evidence type="ECO:0000255" key="1">
    <source>
        <dbReference type="HAMAP-Rule" id="MF_01396"/>
    </source>
</evidence>
<organism>
    <name type="scientific">Yersinia pseudotuberculosis serotype IB (strain PB1/+)</name>
    <dbReference type="NCBI Taxonomy" id="502801"/>
    <lineage>
        <taxon>Bacteria</taxon>
        <taxon>Pseudomonadati</taxon>
        <taxon>Pseudomonadota</taxon>
        <taxon>Gammaproteobacteria</taxon>
        <taxon>Enterobacterales</taxon>
        <taxon>Yersiniaceae</taxon>
        <taxon>Yersinia</taxon>
    </lineage>
</organism>
<keyword id="KW-0066">ATP synthesis</keyword>
<keyword id="KW-0997">Cell inner membrane</keyword>
<keyword id="KW-1003">Cell membrane</keyword>
<keyword id="KW-0138">CF(0)</keyword>
<keyword id="KW-0375">Hydrogen ion transport</keyword>
<keyword id="KW-0406">Ion transport</keyword>
<keyword id="KW-0446">Lipid-binding</keyword>
<keyword id="KW-0472">Membrane</keyword>
<keyword id="KW-0812">Transmembrane</keyword>
<keyword id="KW-1133">Transmembrane helix</keyword>
<keyword id="KW-0813">Transport</keyword>
<protein>
    <recommendedName>
        <fullName evidence="1">ATP synthase subunit c</fullName>
    </recommendedName>
    <alternativeName>
        <fullName evidence="1">ATP synthase F(0) sector subunit c</fullName>
    </alternativeName>
    <alternativeName>
        <fullName evidence="1">F-type ATPase subunit c</fullName>
        <shortName evidence="1">F-ATPase subunit c</shortName>
    </alternativeName>
    <alternativeName>
        <fullName evidence="1">Lipid-binding protein</fullName>
    </alternativeName>
</protein>
<comment type="function">
    <text evidence="1">F(1)F(0) ATP synthase produces ATP from ADP in the presence of a proton or sodium gradient. F-type ATPases consist of two structural domains, F(1) containing the extramembraneous catalytic core and F(0) containing the membrane proton channel, linked together by a central stalk and a peripheral stalk. During catalysis, ATP synthesis in the catalytic domain of F(1) is coupled via a rotary mechanism of the central stalk subunits to proton translocation.</text>
</comment>
<comment type="function">
    <text evidence="1">Key component of the F(0) channel; it plays a direct role in translocation across the membrane. A homomeric c-ring of between 10-14 subunits forms the central stalk rotor element with the F(1) delta and epsilon subunits.</text>
</comment>
<comment type="subunit">
    <text evidence="1">F-type ATPases have 2 components, F(1) - the catalytic core - and F(0) - the membrane proton channel. F(1) has five subunits: alpha(3), beta(3), gamma(1), delta(1), epsilon(1). F(0) has three main subunits: a(1), b(2) and c(10-14). The alpha and beta chains form an alternating ring which encloses part of the gamma chain. F(1) is attached to F(0) by a central stalk formed by the gamma and epsilon chains, while a peripheral stalk is formed by the delta and b chains.</text>
</comment>
<comment type="subcellular location">
    <subcellularLocation>
        <location evidence="1">Cell inner membrane</location>
        <topology evidence="1">Multi-pass membrane protein</topology>
    </subcellularLocation>
</comment>
<comment type="similarity">
    <text evidence="1">Belongs to the ATPase C chain family.</text>
</comment>
<feature type="chain" id="PRO_1000184541" description="ATP synthase subunit c">
    <location>
        <begin position="1"/>
        <end position="79"/>
    </location>
</feature>
<feature type="transmembrane region" description="Helical" evidence="1">
    <location>
        <begin position="11"/>
        <end position="31"/>
    </location>
</feature>
<feature type="transmembrane region" description="Helical" evidence="1">
    <location>
        <begin position="53"/>
        <end position="73"/>
    </location>
</feature>
<feature type="site" description="Reversibly protonated during proton transport" evidence="1">
    <location>
        <position position="61"/>
    </location>
</feature>
<gene>
    <name evidence="1" type="primary">atpE</name>
    <name type="ordered locus">YPTS_4175</name>
</gene>
<dbReference type="EMBL" id="CP001048">
    <property type="protein sequence ID" value="ACC91118.1"/>
    <property type="molecule type" value="Genomic_DNA"/>
</dbReference>
<dbReference type="RefSeq" id="WP_000429386.1">
    <property type="nucleotide sequence ID" value="NZ_CP009780.1"/>
</dbReference>
<dbReference type="SMR" id="B2K842"/>
<dbReference type="GeneID" id="98390858"/>
<dbReference type="KEGG" id="ypb:YPTS_4175"/>
<dbReference type="PATRIC" id="fig|502801.10.peg.3646"/>
<dbReference type="GO" id="GO:0005886">
    <property type="term" value="C:plasma membrane"/>
    <property type="evidence" value="ECO:0007669"/>
    <property type="project" value="UniProtKB-SubCell"/>
</dbReference>
<dbReference type="GO" id="GO:0045259">
    <property type="term" value="C:proton-transporting ATP synthase complex"/>
    <property type="evidence" value="ECO:0007669"/>
    <property type="project" value="UniProtKB-KW"/>
</dbReference>
<dbReference type="GO" id="GO:0033177">
    <property type="term" value="C:proton-transporting two-sector ATPase complex, proton-transporting domain"/>
    <property type="evidence" value="ECO:0007669"/>
    <property type="project" value="InterPro"/>
</dbReference>
<dbReference type="GO" id="GO:0008289">
    <property type="term" value="F:lipid binding"/>
    <property type="evidence" value="ECO:0007669"/>
    <property type="project" value="UniProtKB-KW"/>
</dbReference>
<dbReference type="GO" id="GO:0046933">
    <property type="term" value="F:proton-transporting ATP synthase activity, rotational mechanism"/>
    <property type="evidence" value="ECO:0007669"/>
    <property type="project" value="UniProtKB-UniRule"/>
</dbReference>
<dbReference type="CDD" id="cd18185">
    <property type="entry name" value="ATP-synt_Fo_c_ATPE"/>
    <property type="match status" value="1"/>
</dbReference>
<dbReference type="FunFam" id="1.20.20.10:FF:000002">
    <property type="entry name" value="ATP synthase subunit c"/>
    <property type="match status" value="1"/>
</dbReference>
<dbReference type="Gene3D" id="1.20.20.10">
    <property type="entry name" value="F1F0 ATP synthase subunit C"/>
    <property type="match status" value="1"/>
</dbReference>
<dbReference type="HAMAP" id="MF_01396">
    <property type="entry name" value="ATP_synth_c_bact"/>
    <property type="match status" value="1"/>
</dbReference>
<dbReference type="InterPro" id="IPR005953">
    <property type="entry name" value="ATP_synth_csu_bac/chlpt"/>
</dbReference>
<dbReference type="InterPro" id="IPR000454">
    <property type="entry name" value="ATP_synth_F0_csu"/>
</dbReference>
<dbReference type="InterPro" id="IPR020537">
    <property type="entry name" value="ATP_synth_F0_csu_DDCD_BS"/>
</dbReference>
<dbReference type="InterPro" id="IPR038662">
    <property type="entry name" value="ATP_synth_F0_csu_sf"/>
</dbReference>
<dbReference type="InterPro" id="IPR002379">
    <property type="entry name" value="ATPase_proteolipid_c-like_dom"/>
</dbReference>
<dbReference type="InterPro" id="IPR035921">
    <property type="entry name" value="F/V-ATP_Csub_sf"/>
</dbReference>
<dbReference type="NCBIfam" id="TIGR01260">
    <property type="entry name" value="ATP_synt_c"/>
    <property type="match status" value="1"/>
</dbReference>
<dbReference type="NCBIfam" id="NF005363">
    <property type="entry name" value="PRK06876.1"/>
    <property type="match status" value="1"/>
</dbReference>
<dbReference type="Pfam" id="PF00137">
    <property type="entry name" value="ATP-synt_C"/>
    <property type="match status" value="1"/>
</dbReference>
<dbReference type="PRINTS" id="PR00124">
    <property type="entry name" value="ATPASEC"/>
</dbReference>
<dbReference type="SUPFAM" id="SSF81333">
    <property type="entry name" value="F1F0 ATP synthase subunit C"/>
    <property type="match status" value="1"/>
</dbReference>
<dbReference type="PROSITE" id="PS00605">
    <property type="entry name" value="ATPASE_C"/>
    <property type="match status" value="1"/>
</dbReference>
<sequence>MENLNMDLLYMAAAVMMGLAAIGAAIGIGILGGKFLEGAARQPDLIPLLRTQFFIVMGLVDAIPMIAVGLGLYVMFAVA</sequence>
<name>ATPL_YERPB</name>
<proteinExistence type="inferred from homology"/>
<accession>B2K842</accession>
<reference key="1">
    <citation type="submission" date="2008-04" db="EMBL/GenBank/DDBJ databases">
        <title>Complete sequence of Yersinia pseudotuberculosis PB1/+.</title>
        <authorList>
            <person name="Copeland A."/>
            <person name="Lucas S."/>
            <person name="Lapidus A."/>
            <person name="Glavina del Rio T."/>
            <person name="Dalin E."/>
            <person name="Tice H."/>
            <person name="Bruce D."/>
            <person name="Goodwin L."/>
            <person name="Pitluck S."/>
            <person name="Munk A.C."/>
            <person name="Brettin T."/>
            <person name="Detter J.C."/>
            <person name="Han C."/>
            <person name="Tapia R."/>
            <person name="Schmutz J."/>
            <person name="Larimer F."/>
            <person name="Land M."/>
            <person name="Hauser L."/>
            <person name="Challacombe J.F."/>
            <person name="Green L."/>
            <person name="Lindler L.E."/>
            <person name="Nikolich M.P."/>
            <person name="Richardson P."/>
        </authorList>
    </citation>
    <scope>NUCLEOTIDE SEQUENCE [LARGE SCALE GENOMIC DNA]</scope>
    <source>
        <strain>PB1/+</strain>
    </source>
</reference>